<sequence>MTTLTITRPDDWHIHLRDGAQLKDTVRDISRYMGRAIVMPNLVPPAIDTETALAYYDRIKAQVPAGSQFEPLMVLYLTDKTSPEEIRKAKASGKIVAAKLYPAGATTNSDSGVTDLKNIYPALEAMQEVGMLFLVHGEVTDSSIDIFDRERVFIENILSKIVADFPKLKIVLEHITTKDAVDFVTQASDNVAATITAHHLLYNRNHMLAGGIRPHFYCLPILKRNTHQQALLGAAASGNKKFFLGTDSAPHAKDRKEAACGCAGSYTAHAAIELYAEAFESVNALDKLEAFASFNGPDFYNLPRNSDTITLVKKSWDVPVSYPLGDNNVVPIRAGEQIDWQVE</sequence>
<proteinExistence type="inferred from homology"/>
<organism>
    <name type="scientific">Shewanella sp. (strain MR-4)</name>
    <dbReference type="NCBI Taxonomy" id="60480"/>
    <lineage>
        <taxon>Bacteria</taxon>
        <taxon>Pseudomonadati</taxon>
        <taxon>Pseudomonadota</taxon>
        <taxon>Gammaproteobacteria</taxon>
        <taxon>Alteromonadales</taxon>
        <taxon>Shewanellaceae</taxon>
        <taxon>Shewanella</taxon>
    </lineage>
</organism>
<keyword id="KW-0378">Hydrolase</keyword>
<keyword id="KW-0479">Metal-binding</keyword>
<keyword id="KW-0665">Pyrimidine biosynthesis</keyword>
<keyword id="KW-0862">Zinc</keyword>
<protein>
    <recommendedName>
        <fullName evidence="1">Dihydroorotase</fullName>
        <shortName evidence="1">DHOase</shortName>
        <ecNumber evidence="1">3.5.2.3</ecNumber>
    </recommendedName>
</protein>
<accession>Q0HLX7</accession>
<evidence type="ECO:0000255" key="1">
    <source>
        <dbReference type="HAMAP-Rule" id="MF_00219"/>
    </source>
</evidence>
<evidence type="ECO:0000305" key="2"/>
<name>PYRC_SHESM</name>
<reference key="1">
    <citation type="submission" date="2006-08" db="EMBL/GenBank/DDBJ databases">
        <title>Complete sequence of Shewanella sp. MR-4.</title>
        <authorList>
            <consortium name="US DOE Joint Genome Institute"/>
            <person name="Copeland A."/>
            <person name="Lucas S."/>
            <person name="Lapidus A."/>
            <person name="Barry K."/>
            <person name="Detter J.C."/>
            <person name="Glavina del Rio T."/>
            <person name="Hammon N."/>
            <person name="Israni S."/>
            <person name="Dalin E."/>
            <person name="Tice H."/>
            <person name="Pitluck S."/>
            <person name="Kiss H."/>
            <person name="Brettin T."/>
            <person name="Bruce D."/>
            <person name="Han C."/>
            <person name="Tapia R."/>
            <person name="Gilna P."/>
            <person name="Schmutz J."/>
            <person name="Larimer F."/>
            <person name="Land M."/>
            <person name="Hauser L."/>
            <person name="Kyrpides N."/>
            <person name="Mikhailova N."/>
            <person name="Nealson K."/>
            <person name="Konstantinidis K."/>
            <person name="Klappenbach J."/>
            <person name="Tiedje J."/>
            <person name="Richardson P."/>
        </authorList>
    </citation>
    <scope>NUCLEOTIDE SEQUENCE [LARGE SCALE GENOMIC DNA]</scope>
    <source>
        <strain>MR-4</strain>
    </source>
</reference>
<feature type="chain" id="PRO_0000325577" description="Dihydroorotase">
    <location>
        <begin position="1"/>
        <end position="343"/>
    </location>
</feature>
<feature type="active site" evidence="1">
    <location>
        <position position="247"/>
    </location>
</feature>
<feature type="binding site" evidence="1">
    <location>
        <position position="13"/>
    </location>
    <ligand>
        <name>Zn(2+)</name>
        <dbReference type="ChEBI" id="CHEBI:29105"/>
        <label>1</label>
    </ligand>
</feature>
<feature type="binding site" evidence="1">
    <location>
        <begin position="15"/>
        <end position="17"/>
    </location>
    <ligand>
        <name>substrate</name>
    </ligand>
</feature>
<feature type="binding site" evidence="1">
    <location>
        <position position="15"/>
    </location>
    <ligand>
        <name>Zn(2+)</name>
        <dbReference type="ChEBI" id="CHEBI:29105"/>
        <label>1</label>
    </ligand>
</feature>
<feature type="binding site" evidence="1">
    <location>
        <position position="41"/>
    </location>
    <ligand>
        <name>substrate</name>
    </ligand>
</feature>
<feature type="binding site" description="via carbamate group" evidence="1">
    <location>
        <position position="99"/>
    </location>
    <ligand>
        <name>Zn(2+)</name>
        <dbReference type="ChEBI" id="CHEBI:29105"/>
        <label>1</label>
    </ligand>
</feature>
<feature type="binding site" description="via carbamate group" evidence="1">
    <location>
        <position position="99"/>
    </location>
    <ligand>
        <name>Zn(2+)</name>
        <dbReference type="ChEBI" id="CHEBI:29105"/>
        <label>2</label>
    </ligand>
</feature>
<feature type="binding site" evidence="1">
    <location>
        <position position="136"/>
    </location>
    <ligand>
        <name>substrate</name>
    </ligand>
</feature>
<feature type="binding site" evidence="1">
    <location>
        <position position="136"/>
    </location>
    <ligand>
        <name>Zn(2+)</name>
        <dbReference type="ChEBI" id="CHEBI:29105"/>
        <label>2</label>
    </ligand>
</feature>
<feature type="binding site" evidence="1">
    <location>
        <position position="174"/>
    </location>
    <ligand>
        <name>Zn(2+)</name>
        <dbReference type="ChEBI" id="CHEBI:29105"/>
        <label>2</label>
    </ligand>
</feature>
<feature type="binding site" evidence="1">
    <location>
        <position position="219"/>
    </location>
    <ligand>
        <name>substrate</name>
    </ligand>
</feature>
<feature type="binding site" evidence="1">
    <location>
        <position position="247"/>
    </location>
    <ligand>
        <name>Zn(2+)</name>
        <dbReference type="ChEBI" id="CHEBI:29105"/>
        <label>1</label>
    </ligand>
</feature>
<feature type="binding site" evidence="1">
    <location>
        <position position="251"/>
    </location>
    <ligand>
        <name>substrate</name>
    </ligand>
</feature>
<feature type="binding site" evidence="1">
    <location>
        <position position="263"/>
    </location>
    <ligand>
        <name>substrate</name>
    </ligand>
</feature>
<feature type="modified residue" description="N6-carboxylysine" evidence="1">
    <location>
        <position position="99"/>
    </location>
</feature>
<comment type="function">
    <text evidence="1">Catalyzes the reversible cyclization of carbamoyl aspartate to dihydroorotate.</text>
</comment>
<comment type="catalytic activity">
    <reaction evidence="1">
        <text>(S)-dihydroorotate + H2O = N-carbamoyl-L-aspartate + H(+)</text>
        <dbReference type="Rhea" id="RHEA:24296"/>
        <dbReference type="ChEBI" id="CHEBI:15377"/>
        <dbReference type="ChEBI" id="CHEBI:15378"/>
        <dbReference type="ChEBI" id="CHEBI:30864"/>
        <dbReference type="ChEBI" id="CHEBI:32814"/>
        <dbReference type="EC" id="3.5.2.3"/>
    </reaction>
</comment>
<comment type="cofactor">
    <cofactor evidence="1">
        <name>Zn(2+)</name>
        <dbReference type="ChEBI" id="CHEBI:29105"/>
    </cofactor>
    <text evidence="1">Binds 2 Zn(2+) ions per subunit.</text>
</comment>
<comment type="pathway">
    <text evidence="1">Pyrimidine metabolism; UMP biosynthesis via de novo pathway; (S)-dihydroorotate from bicarbonate: step 3/3.</text>
</comment>
<comment type="subunit">
    <text evidence="1">Homodimer.</text>
</comment>
<comment type="similarity">
    <text evidence="1">Belongs to the metallo-dependent hydrolases superfamily. DHOase family. Class II DHOase subfamily.</text>
</comment>
<comment type="sequence caution" evidence="2">
    <conflict type="erroneous initiation">
        <sequence resource="EMBL-CDS" id="ABI37940"/>
    </conflict>
</comment>
<gene>
    <name evidence="1" type="primary">pyrC</name>
    <name type="ordered locus">Shewmr4_0860</name>
</gene>
<dbReference type="EC" id="3.5.2.3" evidence="1"/>
<dbReference type="EMBL" id="CP000446">
    <property type="protein sequence ID" value="ABI37940.1"/>
    <property type="status" value="ALT_INIT"/>
    <property type="molecule type" value="Genomic_DNA"/>
</dbReference>
<dbReference type="RefSeq" id="WP_023269013.1">
    <property type="nucleotide sequence ID" value="NC_008321.1"/>
</dbReference>
<dbReference type="SMR" id="Q0HLX7"/>
<dbReference type="MEROPS" id="M38.A02"/>
<dbReference type="KEGG" id="she:Shewmr4_0860"/>
<dbReference type="HOGENOM" id="CLU_041558_1_0_6"/>
<dbReference type="UniPathway" id="UPA00070">
    <property type="reaction ID" value="UER00117"/>
</dbReference>
<dbReference type="GO" id="GO:0005829">
    <property type="term" value="C:cytosol"/>
    <property type="evidence" value="ECO:0007669"/>
    <property type="project" value="TreeGrafter"/>
</dbReference>
<dbReference type="GO" id="GO:0004151">
    <property type="term" value="F:dihydroorotase activity"/>
    <property type="evidence" value="ECO:0007669"/>
    <property type="project" value="UniProtKB-UniRule"/>
</dbReference>
<dbReference type="GO" id="GO:0008270">
    <property type="term" value="F:zinc ion binding"/>
    <property type="evidence" value="ECO:0007669"/>
    <property type="project" value="UniProtKB-UniRule"/>
</dbReference>
<dbReference type="GO" id="GO:0006207">
    <property type="term" value="P:'de novo' pyrimidine nucleobase biosynthetic process"/>
    <property type="evidence" value="ECO:0007669"/>
    <property type="project" value="TreeGrafter"/>
</dbReference>
<dbReference type="GO" id="GO:0044205">
    <property type="term" value="P:'de novo' UMP biosynthetic process"/>
    <property type="evidence" value="ECO:0007669"/>
    <property type="project" value="UniProtKB-UniRule"/>
</dbReference>
<dbReference type="CDD" id="cd01294">
    <property type="entry name" value="DHOase"/>
    <property type="match status" value="1"/>
</dbReference>
<dbReference type="FunFam" id="3.20.20.140:FF:000006">
    <property type="entry name" value="Dihydroorotase"/>
    <property type="match status" value="1"/>
</dbReference>
<dbReference type="Gene3D" id="3.20.20.140">
    <property type="entry name" value="Metal-dependent hydrolases"/>
    <property type="match status" value="1"/>
</dbReference>
<dbReference type="HAMAP" id="MF_00219">
    <property type="entry name" value="PyrC_classII"/>
    <property type="match status" value="1"/>
</dbReference>
<dbReference type="InterPro" id="IPR006680">
    <property type="entry name" value="Amidohydro-rel"/>
</dbReference>
<dbReference type="InterPro" id="IPR004721">
    <property type="entry name" value="DHOdimr"/>
</dbReference>
<dbReference type="InterPro" id="IPR002195">
    <property type="entry name" value="Dihydroorotase_CS"/>
</dbReference>
<dbReference type="InterPro" id="IPR032466">
    <property type="entry name" value="Metal_Hydrolase"/>
</dbReference>
<dbReference type="NCBIfam" id="TIGR00856">
    <property type="entry name" value="pyrC_dimer"/>
    <property type="match status" value="1"/>
</dbReference>
<dbReference type="PANTHER" id="PTHR43137">
    <property type="entry name" value="DIHYDROOROTASE"/>
    <property type="match status" value="1"/>
</dbReference>
<dbReference type="PANTHER" id="PTHR43137:SF1">
    <property type="entry name" value="DIHYDROOROTASE"/>
    <property type="match status" value="1"/>
</dbReference>
<dbReference type="Pfam" id="PF01979">
    <property type="entry name" value="Amidohydro_1"/>
    <property type="match status" value="1"/>
</dbReference>
<dbReference type="PIRSF" id="PIRSF001237">
    <property type="entry name" value="DHOdimr"/>
    <property type="match status" value="1"/>
</dbReference>
<dbReference type="SUPFAM" id="SSF51556">
    <property type="entry name" value="Metallo-dependent hydrolases"/>
    <property type="match status" value="1"/>
</dbReference>
<dbReference type="PROSITE" id="PS00482">
    <property type="entry name" value="DIHYDROOROTASE_1"/>
    <property type="match status" value="1"/>
</dbReference>
<dbReference type="PROSITE" id="PS00483">
    <property type="entry name" value="DIHYDROOROTASE_2"/>
    <property type="match status" value="1"/>
</dbReference>